<gene>
    <name type="primary">SRRT</name>
    <name type="synonym">ARS2</name>
    <name type="synonym">ASR2</name>
</gene>
<sequence>HKEEELLGSSGGPPPEEPPKEGNPAEINVERDEKLIKVLDKLLLYLRIVHSLDYYNTCEYPNEDEMPNRCGIIHVRGPMPPNRISHGEVLEWQKTFEEKLTPLLSVRESLSEEEAQKMGRKDTEQEVEKFVTSNTQELGKDKWLCPLSGKKFKGPEFVRKHIFNKHAEKIEEVKKEVAFFNNFLTDAKRPALPEMKPAQPPGPAQILPPGLTPGLPYPHQTPQGLMPYGQPALPIFGYGAGAVRPAVPTGGPPYPHGPYGAGRGNYDAFRGQGGYPGKPRNRMVRGDPRAIVEYRDLDAPDDVDFF</sequence>
<evidence type="ECO:0000250" key="1"/>
<evidence type="ECO:0000250" key="2">
    <source>
        <dbReference type="UniProtKB" id="Q99MR6"/>
    </source>
</evidence>
<evidence type="ECO:0000250" key="3">
    <source>
        <dbReference type="UniProtKB" id="Q9BXP5"/>
    </source>
</evidence>
<evidence type="ECO:0000256" key="4">
    <source>
        <dbReference type="SAM" id="MobiDB-lite"/>
    </source>
</evidence>
<evidence type="ECO:0000305" key="5"/>
<proteinExistence type="evidence at transcript level"/>
<protein>
    <recommendedName>
        <fullName>Serrate RNA effector molecule homolog</fullName>
    </recommendedName>
    <alternativeName>
        <fullName>Arsenite-resistance protein 2</fullName>
    </alternativeName>
</protein>
<comment type="function">
    <text evidence="1">Acts as a mediator between the cap-binding complex (CBC) and the primary microRNAs (miRNAs) processing machinery during cell proliferation. Contributes to the stability and delivery of capped primary miRNA transcripts to the primary miRNA processing complex containing DGCR8 and DROSHA, thereby playing a role in RNA-mediated gene silencing (RNAi) by miRNAs. Binds capped RNAs (m7GpppG-capped RNA); however interaction is probably mediated via its interaction with NCBP1/CBP80 component of the CBC complex. Involved in cell cycle progression at S phase (By similarity). Does not directly confer arsenite resistance but rather modulates arsenic sensitivity. Independently of its activity on miRNAs, necessary and sufficient to promote neural stem cell self-renewal. Does so by directly binding SOX2 promoter and positively regulating its transcription (By similarity).</text>
</comment>
<comment type="subunit">
    <text evidence="2 3">Interacts with CASP8AP2, ERBB4, NCBP1/CBP80 and DROSHA. Interacts with LUZP4. Interacts with NCBP2/CBP20 and NCBP3.</text>
</comment>
<comment type="subcellular location">
    <subcellularLocation>
        <location evidence="1">Nucleus</location>
        <location evidence="1">Nucleoplasm</location>
    </subcellularLocation>
    <subcellularLocation>
        <location evidence="1">Cytoplasm</location>
    </subcellularLocation>
    <text evidence="1">Predominantly nuclear. Shuttles between the nucleus and the cytoplasm in a CRM1-dependent way (By similarity).</text>
</comment>
<comment type="similarity">
    <text evidence="5">Belongs to the ARS2 family.</text>
</comment>
<comment type="sequence caution" evidence="5">
    <conflict type="frameshift">
        <sequence resource="EMBL-CDS" id="AAA83777"/>
    </conflict>
</comment>
<organism>
    <name type="scientific">Cricetulus griseus</name>
    <name type="common">Chinese hamster</name>
    <name type="synonym">Cricetulus barabensis griseus</name>
    <dbReference type="NCBI Taxonomy" id="10029"/>
    <lineage>
        <taxon>Eukaryota</taxon>
        <taxon>Metazoa</taxon>
        <taxon>Chordata</taxon>
        <taxon>Craniata</taxon>
        <taxon>Vertebrata</taxon>
        <taxon>Euteleostomi</taxon>
        <taxon>Mammalia</taxon>
        <taxon>Eutheria</taxon>
        <taxon>Euarchontoglires</taxon>
        <taxon>Glires</taxon>
        <taxon>Rodentia</taxon>
        <taxon>Myomorpha</taxon>
        <taxon>Muroidea</taxon>
        <taxon>Cricetidae</taxon>
        <taxon>Cricetinae</taxon>
        <taxon>Cricetulus</taxon>
    </lineage>
</organism>
<name>SRRT_CRIGR</name>
<dbReference type="EMBL" id="U41500">
    <property type="protein sequence ID" value="AAA83777.1"/>
    <property type="status" value="ALT_FRAME"/>
    <property type="molecule type" value="mRNA"/>
</dbReference>
<dbReference type="RefSeq" id="NP_001233648.1">
    <property type="nucleotide sequence ID" value="NM_001246719.1"/>
</dbReference>
<dbReference type="SMR" id="Q60436"/>
<dbReference type="PaxDb" id="10029-NP_001233648.1"/>
<dbReference type="Proteomes" id="UP000694386">
    <property type="component" value="Unplaced"/>
</dbReference>
<dbReference type="Proteomes" id="UP001108280">
    <property type="component" value="Unplaced"/>
</dbReference>
<dbReference type="GO" id="GO:0005737">
    <property type="term" value="C:cytoplasm"/>
    <property type="evidence" value="ECO:0000250"/>
    <property type="project" value="UniProtKB"/>
</dbReference>
<dbReference type="GO" id="GO:0016604">
    <property type="term" value="C:nuclear body"/>
    <property type="evidence" value="ECO:0007669"/>
    <property type="project" value="TreeGrafter"/>
</dbReference>
<dbReference type="GO" id="GO:0005654">
    <property type="term" value="C:nucleoplasm"/>
    <property type="evidence" value="ECO:0000250"/>
    <property type="project" value="UniProtKB"/>
</dbReference>
<dbReference type="GO" id="GO:0003677">
    <property type="term" value="F:DNA binding"/>
    <property type="evidence" value="ECO:0000250"/>
    <property type="project" value="UniProtKB"/>
</dbReference>
<dbReference type="GO" id="GO:0097150">
    <property type="term" value="P:neuronal stem cell population maintenance"/>
    <property type="evidence" value="ECO:0000250"/>
    <property type="project" value="UniProtKB"/>
</dbReference>
<dbReference type="GO" id="GO:0031053">
    <property type="term" value="P:primary miRNA processing"/>
    <property type="evidence" value="ECO:0000250"/>
    <property type="project" value="UniProtKB"/>
</dbReference>
<dbReference type="GO" id="GO:0006355">
    <property type="term" value="P:regulation of DNA-templated transcription"/>
    <property type="evidence" value="ECO:0000250"/>
    <property type="project" value="UniProtKB"/>
</dbReference>
<dbReference type="InterPro" id="IPR039727">
    <property type="entry name" value="SE/Ars2"/>
</dbReference>
<dbReference type="InterPro" id="IPR007042">
    <property type="entry name" value="SERRATE/Ars2_C"/>
</dbReference>
<dbReference type="PANTHER" id="PTHR13165">
    <property type="entry name" value="ARSENITE-RESISTANCE PROTEIN 2"/>
    <property type="match status" value="1"/>
</dbReference>
<dbReference type="PANTHER" id="PTHR13165:SF0">
    <property type="entry name" value="SERRATE RNA EFFECTOR MOLECULE HOMOLOG"/>
    <property type="match status" value="1"/>
</dbReference>
<dbReference type="Pfam" id="PF04959">
    <property type="entry name" value="ARS2"/>
    <property type="match status" value="1"/>
</dbReference>
<keyword id="KW-0010">Activator</keyword>
<keyword id="KW-0963">Cytoplasm</keyword>
<keyword id="KW-0488">Methylation</keyword>
<keyword id="KW-0539">Nucleus</keyword>
<keyword id="KW-0597">Phosphoprotein</keyword>
<keyword id="KW-0943">RNA-mediated gene silencing</keyword>
<keyword id="KW-0804">Transcription</keyword>
<keyword id="KW-0805">Transcription regulation</keyword>
<feature type="chain" id="PRO_0000220964" description="Serrate RNA effector molecule homolog">
    <location>
        <begin position="1" status="less than"/>
        <end position="306"/>
    </location>
</feature>
<feature type="region of interest" description="Disordered" evidence="4">
    <location>
        <begin position="1"/>
        <end position="28"/>
    </location>
</feature>
<feature type="region of interest" description="Disordered" evidence="4">
    <location>
        <begin position="251"/>
        <end position="284"/>
    </location>
</feature>
<feature type="modified residue" description="Phosphothreonine" evidence="3">
    <location>
        <position position="101"/>
    </location>
</feature>
<feature type="modified residue" description="Phosphoserine" evidence="3">
    <location>
        <position position="109"/>
    </location>
</feature>
<feature type="modified residue" description="Omega-N-methylarginine" evidence="3">
    <location>
        <position position="263"/>
    </location>
</feature>
<feature type="modified residue" description="Omega-N-methylarginine" evidence="3">
    <location>
        <position position="270"/>
    </location>
</feature>
<feature type="modified residue" description="Omega-N-methylarginine" evidence="3">
    <location>
        <position position="280"/>
    </location>
</feature>
<feature type="non-terminal residue">
    <location>
        <position position="1"/>
    </location>
</feature>
<reference key="1">
    <citation type="journal article" date="1999" name="Carcinogenesis">
        <title>Expression cloning for arsenite-resistance resulted in isolation of tumor-suppressor fau cDNA: possible involvement of the ubiquitin system in arsenic carcinogenesis.</title>
        <authorList>
            <person name="Rossman T.G."/>
            <person name="Wang Z."/>
        </authorList>
    </citation>
    <scope>NUCLEOTIDE SEQUENCE [MRNA]</scope>
    <scope>PRELIMINARY FUNCTION</scope>
    <source>
        <tissue>Lung</tissue>
    </source>
</reference>
<accession>Q60436</accession>